<name>MREG_MOUSE</name>
<evidence type="ECO:0000250" key="1">
    <source>
        <dbReference type="UniProtKB" id="Q8N565"/>
    </source>
</evidence>
<evidence type="ECO:0000269" key="2">
    <source>
    </source>
</evidence>
<evidence type="ECO:0000269" key="3">
    <source>
    </source>
</evidence>
<evidence type="ECO:0000269" key="4">
    <source>
    </source>
</evidence>
<evidence type="ECO:0000269" key="5">
    <source>
    </source>
</evidence>
<evidence type="ECO:0000269" key="6">
    <source>
    </source>
</evidence>
<evidence type="ECO:0000269" key="7">
    <source>
    </source>
</evidence>
<evidence type="ECO:0000269" key="8">
    <source>
    </source>
</evidence>
<evidence type="ECO:0000269" key="9">
    <source>
    </source>
</evidence>
<evidence type="ECO:0000303" key="10">
    <source>
    </source>
</evidence>
<evidence type="ECO:0000303" key="11">
    <source>
    </source>
</evidence>
<evidence type="ECO:0000303" key="12">
    <source>
    </source>
</evidence>
<evidence type="ECO:0000305" key="13"/>
<evidence type="ECO:0000305" key="14">
    <source>
    </source>
</evidence>
<evidence type="ECO:0000305" key="15">
    <source>
    </source>
</evidence>
<evidence type="ECO:0007744" key="16">
    <source>
        <dbReference type="PDB" id="6CMY"/>
    </source>
</evidence>
<evidence type="ECO:0007829" key="17">
    <source>
        <dbReference type="PDB" id="6CMY"/>
    </source>
</evidence>
<accession>Q6NVG5</accession>
<keyword id="KW-0002">3D-structure</keyword>
<keyword id="KW-1003">Cell membrane</keyword>
<keyword id="KW-0968">Cytoplasmic vesicle</keyword>
<keyword id="KW-0446">Lipid-binding</keyword>
<keyword id="KW-0449">Lipoprotein</keyword>
<keyword id="KW-0458">Lysosome</keyword>
<keyword id="KW-0472">Membrane</keyword>
<keyword id="KW-0564">Palmitate</keyword>
<keyword id="KW-0597">Phosphoprotein</keyword>
<keyword id="KW-1185">Reference proteome</keyword>
<keyword id="KW-0813">Transport</keyword>
<organism>
    <name type="scientific">Mus musculus</name>
    <name type="common">Mouse</name>
    <dbReference type="NCBI Taxonomy" id="10090"/>
    <lineage>
        <taxon>Eukaryota</taxon>
        <taxon>Metazoa</taxon>
        <taxon>Chordata</taxon>
        <taxon>Craniata</taxon>
        <taxon>Vertebrata</taxon>
        <taxon>Euteleostomi</taxon>
        <taxon>Mammalia</taxon>
        <taxon>Eutheria</taxon>
        <taxon>Euarchontoglires</taxon>
        <taxon>Glires</taxon>
        <taxon>Rodentia</taxon>
        <taxon>Myomorpha</taxon>
        <taxon>Muroidea</taxon>
        <taxon>Muridae</taxon>
        <taxon>Murinae</taxon>
        <taxon>Mus</taxon>
        <taxon>Mus</taxon>
    </lineage>
</organism>
<protein>
    <recommendedName>
        <fullName evidence="11 12">Melanoregulin</fullName>
    </recommendedName>
    <alternativeName>
        <fullName evidence="10">Dilute suppressor protein</fullName>
    </alternativeName>
    <alternativeName>
        <fullName evidence="12">Whn-dependent transcript 2</fullName>
    </alternativeName>
</protein>
<gene>
    <name type="primary">Mreg</name>
    <name evidence="10" type="synonym">Dsu</name>
    <name type="synonym">Gm974</name>
    <name evidence="12" type="synonym">Wdt2</name>
</gene>
<dbReference type="EMBL" id="AY628210">
    <property type="protein sequence ID" value="AAV32092.1"/>
    <property type="molecule type" value="mRNA"/>
</dbReference>
<dbReference type="EMBL" id="BC068125">
    <property type="protein sequence ID" value="AAH68125.1"/>
    <property type="molecule type" value="mRNA"/>
</dbReference>
<dbReference type="CCDS" id="CCDS15032.1"/>
<dbReference type="RefSeq" id="NP_001005423.1">
    <property type="nucleotide sequence ID" value="NM_001005423.3"/>
</dbReference>
<dbReference type="PDB" id="6CMY">
    <property type="method" value="NMR"/>
    <property type="chains" value="A=33-214"/>
</dbReference>
<dbReference type="PDBsum" id="6CMY"/>
<dbReference type="BMRB" id="Q6NVG5"/>
<dbReference type="SMR" id="Q6NVG5"/>
<dbReference type="FunCoup" id="Q6NVG5">
    <property type="interactions" value="108"/>
</dbReference>
<dbReference type="STRING" id="10090.ENSMUSP00000041878"/>
<dbReference type="iPTMnet" id="Q6NVG5"/>
<dbReference type="PhosphoSitePlus" id="Q6NVG5"/>
<dbReference type="SwissPalm" id="Q6NVG5"/>
<dbReference type="PaxDb" id="10090-ENSMUSP00000041878"/>
<dbReference type="PeptideAtlas" id="Q6NVG5"/>
<dbReference type="ProteomicsDB" id="291399"/>
<dbReference type="Pumba" id="Q6NVG5"/>
<dbReference type="Antibodypedia" id="34232">
    <property type="antibodies" value="170 antibodies from 19 providers"/>
</dbReference>
<dbReference type="DNASU" id="381269"/>
<dbReference type="Ensembl" id="ENSMUST00000048860.9">
    <property type="protein sequence ID" value="ENSMUSP00000041878.8"/>
    <property type="gene ID" value="ENSMUSG00000039395.9"/>
</dbReference>
<dbReference type="GeneID" id="381269"/>
<dbReference type="KEGG" id="mmu:381269"/>
<dbReference type="UCSC" id="uc007bkg.2">
    <property type="organism name" value="mouse"/>
</dbReference>
<dbReference type="AGR" id="MGI:2151839"/>
<dbReference type="CTD" id="55686"/>
<dbReference type="MGI" id="MGI:2151839">
    <property type="gene designation" value="Mreg"/>
</dbReference>
<dbReference type="VEuPathDB" id="HostDB:ENSMUSG00000039395"/>
<dbReference type="eggNOG" id="ENOG502S05X">
    <property type="taxonomic scope" value="Eukaryota"/>
</dbReference>
<dbReference type="GeneTree" id="ENSGT00390000008926"/>
<dbReference type="HOGENOM" id="CLU_105265_0_0_1"/>
<dbReference type="InParanoid" id="Q6NVG5"/>
<dbReference type="OMA" id="CRCLEEP"/>
<dbReference type="OrthoDB" id="10015106at2759"/>
<dbReference type="PhylomeDB" id="Q6NVG5"/>
<dbReference type="TreeFam" id="TF334733"/>
<dbReference type="BioGRID-ORCS" id="381269">
    <property type="hits" value="4 hits in 78 CRISPR screens"/>
</dbReference>
<dbReference type="ChiTaRS" id="Mreg">
    <property type="organism name" value="mouse"/>
</dbReference>
<dbReference type="PRO" id="PR:Q6NVG5"/>
<dbReference type="Proteomes" id="UP000000589">
    <property type="component" value="Chromosome 1"/>
</dbReference>
<dbReference type="RNAct" id="Q6NVG5">
    <property type="molecule type" value="protein"/>
</dbReference>
<dbReference type="Bgee" id="ENSMUSG00000039395">
    <property type="expression patterns" value="Expressed in soleus muscle and 205 other cell types or tissues"/>
</dbReference>
<dbReference type="GO" id="GO:0016324">
    <property type="term" value="C:apical plasma membrane"/>
    <property type="evidence" value="ECO:0007669"/>
    <property type="project" value="UniProtKB-SubCell"/>
</dbReference>
<dbReference type="GO" id="GO:0030659">
    <property type="term" value="C:cytoplasmic vesicle membrane"/>
    <property type="evidence" value="ECO:0000314"/>
    <property type="project" value="UniProtKB"/>
</dbReference>
<dbReference type="GO" id="GO:0031902">
    <property type="term" value="C:late endosome membrane"/>
    <property type="evidence" value="ECO:0000314"/>
    <property type="project" value="UniProtKB"/>
</dbReference>
<dbReference type="GO" id="GO:0005765">
    <property type="term" value="C:lysosomal membrane"/>
    <property type="evidence" value="ECO:0007669"/>
    <property type="project" value="UniProtKB-SubCell"/>
</dbReference>
<dbReference type="GO" id="GO:0042470">
    <property type="term" value="C:melanosome"/>
    <property type="evidence" value="ECO:0000314"/>
    <property type="project" value="MGI"/>
</dbReference>
<dbReference type="GO" id="GO:0033162">
    <property type="term" value="C:melanosome membrane"/>
    <property type="evidence" value="ECO:0000314"/>
    <property type="project" value="UniProtKB"/>
</dbReference>
<dbReference type="GO" id="GO:0031090">
    <property type="term" value="C:organelle membrane"/>
    <property type="evidence" value="ECO:0000314"/>
    <property type="project" value="UniProtKB"/>
</dbReference>
<dbReference type="GO" id="GO:0032991">
    <property type="term" value="C:protein-containing complex"/>
    <property type="evidence" value="ECO:0000314"/>
    <property type="project" value="MGI"/>
</dbReference>
<dbReference type="GO" id="GO:0035091">
    <property type="term" value="F:phosphatidylinositol binding"/>
    <property type="evidence" value="ECO:0000314"/>
    <property type="project" value="UniProtKB"/>
</dbReference>
<dbReference type="GO" id="GO:0048066">
    <property type="term" value="P:developmental pigmentation"/>
    <property type="evidence" value="ECO:0000315"/>
    <property type="project" value="MGI"/>
</dbReference>
<dbReference type="GO" id="GO:0030318">
    <property type="term" value="P:melanocyte differentiation"/>
    <property type="evidence" value="ECO:0000315"/>
    <property type="project" value="MGI"/>
</dbReference>
<dbReference type="GO" id="GO:0032400">
    <property type="term" value="P:melanosome localization"/>
    <property type="evidence" value="ECO:0000315"/>
    <property type="project" value="UniProtKB"/>
</dbReference>
<dbReference type="GO" id="GO:0032402">
    <property type="term" value="P:melanosome transport"/>
    <property type="evidence" value="ECO:0000314"/>
    <property type="project" value="MGI"/>
</dbReference>
<dbReference type="GO" id="GO:0072385">
    <property type="term" value="P:minus-end-directed organelle transport along microtubule"/>
    <property type="evidence" value="ECO:0000315"/>
    <property type="project" value="UniProtKB"/>
</dbReference>
<dbReference type="GO" id="GO:0090382">
    <property type="term" value="P:phagosome maturation"/>
    <property type="evidence" value="ECO:0000315"/>
    <property type="project" value="UniProtKB"/>
</dbReference>
<dbReference type="GO" id="GO:0043473">
    <property type="term" value="P:pigmentation"/>
    <property type="evidence" value="ECO:0000315"/>
    <property type="project" value="MGI"/>
</dbReference>
<dbReference type="InterPro" id="IPR031638">
    <property type="entry name" value="Melanoregulin"/>
</dbReference>
<dbReference type="PANTHER" id="PTHR34340">
    <property type="entry name" value="MELANOREGULIN"/>
    <property type="match status" value="1"/>
</dbReference>
<dbReference type="PANTHER" id="PTHR34340:SF3">
    <property type="entry name" value="MELANOREGULIN"/>
    <property type="match status" value="1"/>
</dbReference>
<dbReference type="Pfam" id="PF15812">
    <property type="entry name" value="MREG"/>
    <property type="match status" value="1"/>
</dbReference>
<comment type="function">
    <text evidence="2 4 5 6 7 8 9 14">Probably functions as a cargo-recognition protein that couples cytoplasmic vesicles to the transport machinery (PubMed:22275436, PubMed:22940130, PubMed:30174147). Plays a role in hair pigmentation, a process that involves shedding of melanosome-containing vesicles from melanocytes, followed by phagocytosis of the melanosome-containing vesicles by keratinocytes (PubMed:15550542, PubMed:22753477, PubMed:3410303). Functions on melanosomes as receptor for RILP and the complex formed by RILP and DCTN1, and thereby contributes to retrograde melanosome transport from the cell periphery to the center (PubMed:22275436, PubMed:22940130). Overexpression causes accumulation of late endosomes and/or lysosomes at the microtubule organising center (MTOC) at the center of the cell (PubMed:19240024, PubMed:30174147). Probably binds cholesterol and requires the presence of cholesterol in membranes to function in microtubule-mediated retrograde organelle transport (PubMed:30174147). Binds phosphatidylinositol 3-phosphate, phosphatidylinositol 4-phosphate, phosphatidylinositol 5-phosphate and phosphatidylinositol 3,5-bisphosphate, but not phosphatidylinositol 3,4-bisphosphate or phosphatidylinositol 4,5-bisphosphate (PubMed:19240024). Required for normal phagosome clearing and normal activation of lysosomal enzymes in lysosomes from retinal pigment epithelium cells (PubMed:19240024). Required for normal degradation of the lipofuscin component N-retinylidene-N-retinylethanolamine (A2E) in the eye (PubMed:19240024). May function in membrane fusion and regulate the biogenesis of disk membranes of photoreceptor rod cells (Probable).</text>
</comment>
<comment type="subunit">
    <text evidence="3 5">Identified in a complex with RILP and DCTN1; interacts directly with RILP, but does not interact directly with DCTN1 (PubMed:22275436). Interacts with PRPH2 (PubMed:17260955).</text>
</comment>
<comment type="subcellular location">
    <subcellularLocation>
        <location evidence="3">Apical cell membrane</location>
        <topology evidence="3">Peripheral membrane protein</topology>
    </subcellularLocation>
    <subcellularLocation>
        <location evidence="5 7">Melanosome membrane</location>
        <topology evidence="7">Lipid-anchor</topology>
    </subcellularLocation>
    <subcellularLocation>
        <location evidence="7 8">Lysosome membrane</location>
        <topology evidence="7">Lipid-anchor</topology>
    </subcellularLocation>
    <subcellularLocation>
        <location evidence="4">Cytoplasmic vesicle membrane</location>
    </subcellularLocation>
    <text evidence="3">Localizes to the inner segment and basal outer segment of rods in the retina.</text>
</comment>
<comment type="tissue specificity">
    <text evidence="2 3 4">Detected in melanocytes (PubMed:15550542). Expressed in retina, in retinal pigment epithelium (at protein level) (PubMed:17260955, PubMed:19240024). Widely expressed with higher expression in skin, heart, liver, testis and thymus (PubMed:15550542). Detected in retina, in retinal pigment epithelium cells (PubMed:19240024).</text>
</comment>
<comment type="developmental stage">
    <text evidence="2">Detected throughout embryogenesis, from 7 dpc to 17 dpc.</text>
</comment>
<comment type="PTM">
    <text evidence="7">Palmitoylated. Palmitoylation is required to maintain the protein at the melanosome membrane.</text>
</comment>
<comment type="disruption phenotype">
    <text evidence="2 4 5 6 9">Dilute mice carry a hypomorphic allele of Myo5a, resulting in melanosome clustering in the center of the cell. This causes decreased light absorption and an apparent dilution of coat color. The hair color of mice that are deficient for both Myo5a and Mreg appears nearly normal, but the abnormal clustering of the melanosomes persists (PubMed:15550542, PubMed:22753477, PubMed:3410303). Likewise, mice deficient for Rab27a or Mreg have a gray coat, while mice deficient for Mreg and Rab27a, or Mreg and Mlph, have a hair coat that appears nearly black (PubMed:3410303). In spite of melanosome clustering, shedding of melanosome-containing vesicles and their uptake by adjacent keratinocytes is restored in mice that are deficient for both Myo5a and Mreg (PubMed:22753477). RNAi-mediated knockdown of Mreg in cultured Rab27a-deficient melanocytes restores normal melanosome location at the cell periphery. In cultured wild-type melanocytes melanosomes are dispersed at the cell periphery, and RNAi-mediated knockdown of Mreg has no effect on melanosome location (PubMed:22275436). In mice lacking Mreg, the number of phagosomes in retinal pigment epithelial cells displays a normal, rapid increase after the onset of light, but then decreases much more slowly than in wild-type (PubMed:19240024). Eyecups from 9 and 12 month old mutant mice display increased levels of the lipofuscin component N-retinylidene-N-retinylethanolamine (A2E) (PubMed:19240024).</text>
</comment>
<comment type="similarity">
    <text evidence="13">Belongs to the melanoregulin family.</text>
</comment>
<proteinExistence type="evidence at protein level"/>
<sequence>MGLRRWLRSACCCCPCRCLEEPARPEKEPLVSGNNPYSSFGATLERDDEKNLWSMPHDVSHTEADDDRILYNLIVIRNQQTKDSEEWQRLNYDIYTLRQIRREVRNRWRRILEDLGFQREADSLLSVTKLSTMSDSKNTRKAREMLLKLAEETSIFPASWELSERYLLVVDRLIALDAAEDFFKIASQMYPKKPGVPCLVDGQRKLHCLPFPSP</sequence>
<feature type="chain" id="PRO_0000292176" description="Melanoregulin">
    <location>
        <begin position="1"/>
        <end position="214"/>
    </location>
</feature>
<feature type="short sequence motif" description="Cholesterol-binding sequence motif" evidence="15">
    <location>
        <begin position="162"/>
        <end position="172"/>
    </location>
</feature>
<feature type="modified residue" description="Phosphoserine" evidence="1">
    <location>
        <position position="213"/>
    </location>
</feature>
<feature type="mutagenesis site" description="No effect on location at the melanosome membrane." evidence="7">
    <original>G</original>
    <variation>A</variation>
    <location>
        <position position="2"/>
    </location>
</feature>
<feature type="mutagenesis site" description="Loss of location at the melanosome membrane; when associated with S-16 and S-18." evidence="7">
    <original>CCCC</original>
    <variation>SSSS</variation>
    <location>
        <begin position="11"/>
        <end position="14"/>
    </location>
</feature>
<feature type="mutagenesis site" description="Loss of location at the melanosome membrane; when associated with 11-SSSS-14 and S-18." evidence="7">
    <original>C</original>
    <variation>S</variation>
    <location>
        <position position="16"/>
    </location>
</feature>
<feature type="mutagenesis site" description="Loss of location at the melanosome membrane; when associated with 11-SSSS-14 and S-16." evidence="7">
    <original>C</original>
    <variation>S</variation>
    <location>
        <position position="18"/>
    </location>
</feature>
<feature type="mutagenesis site" description="Loss of the ability to promote lysosome clustering at the center of the cell. No effect on location at lysosome membranes." evidence="8">
    <original>Y</original>
    <variation>I</variation>
    <location>
        <position position="166"/>
    </location>
</feature>
<feature type="mutagenesis site" description="Mildly reduced ability to promote lysosome clustering at the center of the cell; when associated with K-180 and K-181." evidence="8">
    <original>D</original>
    <variation>K</variation>
    <location>
        <position position="177"/>
    </location>
</feature>
<feature type="mutagenesis site" description="Mildly reduced ability to promote lysosome clustering at the center of the cell; when associated with K-177 and K-181." evidence="8">
    <original>E</original>
    <variation>K</variation>
    <location>
        <position position="180"/>
    </location>
</feature>
<feature type="mutagenesis site" description="Mildly reduced ability to promote lysosome clustering at the center of the cell; when associated with K-177 and K-180." evidence="8">
    <original>D</original>
    <variation>K</variation>
    <location>
        <position position="181"/>
    </location>
</feature>
<feature type="helix" evidence="17">
    <location>
        <begin position="55"/>
        <end position="59"/>
    </location>
</feature>
<feature type="helix" evidence="17">
    <location>
        <begin position="65"/>
        <end position="79"/>
    </location>
</feature>
<feature type="helix" evidence="17">
    <location>
        <begin position="85"/>
        <end position="115"/>
    </location>
</feature>
<feature type="helix" evidence="17">
    <location>
        <begin position="118"/>
        <end position="125"/>
    </location>
</feature>
<feature type="helix" evidence="17">
    <location>
        <begin position="141"/>
        <end position="152"/>
    </location>
</feature>
<feature type="helix" evidence="17">
    <location>
        <begin position="164"/>
        <end position="174"/>
    </location>
</feature>
<feature type="helix" evidence="17">
    <location>
        <begin position="180"/>
        <end position="189"/>
    </location>
</feature>
<reference key="1">
    <citation type="journal article" date="2004" name="Proc. Natl. Acad. Sci. U.S.A.">
        <title>dsu functions in a MYO5A-independent pathway to suppress the coat color of dilute mice.</title>
        <authorList>
            <person name="O'Sullivan T.N."/>
            <person name="Wu X.S."/>
            <person name="Rachel R.A."/>
            <person name="Huang J.-D."/>
            <person name="Swing D.A."/>
            <person name="Matesic L.E."/>
            <person name="Hammer J.A. III"/>
            <person name="Copeland N.G."/>
            <person name="Jenkins N.A."/>
        </authorList>
    </citation>
    <scope>NUCLEOTIDE SEQUENCE [MRNA]</scope>
    <scope>FUNCTION</scope>
    <scope>DISRUPTION PHENOTYPE</scope>
    <scope>TISSUE SPECIFICITY</scope>
    <scope>DEVELOPMENTAL STAGE</scope>
    <source>
        <strain>C57BL/6J</strain>
        <tissue>Melanocyte</tissue>
    </source>
</reference>
<reference key="2">
    <citation type="journal article" date="2004" name="Genome Res.">
        <title>The status, quality, and expansion of the NIH full-length cDNA project: the Mammalian Gene Collection (MGC).</title>
        <authorList>
            <consortium name="The MGC Project Team"/>
        </authorList>
    </citation>
    <scope>NUCLEOTIDE SEQUENCE [LARGE SCALE MRNA]</scope>
    <source>
        <strain>C57BL/6J</strain>
        <tissue>Brain</tissue>
    </source>
</reference>
<reference key="3">
    <citation type="journal article" date="1988" name="Genetics">
        <title>The murine dilute suppressor gene dsu suppresses the coat-color phenotype of three pigment mutations that alter melanocyte morphology, d, ash and ln.</title>
        <authorList>
            <person name="Moore K.J."/>
            <person name="Swing D.A."/>
            <person name="Rinchik E.M."/>
            <person name="Mucenski M.L."/>
            <person name="Buchberg A.M."/>
            <person name="Copeland N.G."/>
            <person name="Jenkins N.A."/>
        </authorList>
    </citation>
    <scope>FUNCTION</scope>
    <scope>DISRUPTION PHENOTYPE</scope>
</reference>
<reference key="4">
    <citation type="journal article" date="2007" name="Biochemistry">
        <title>The tetraspanin protein peripherin-2 forms a complex with melanoregulin, a putative membrane fusion regulator.</title>
        <authorList>
            <person name="Boesze-Battaglia K."/>
            <person name="Song H."/>
            <person name="Sokolov M."/>
            <person name="Lillo C."/>
            <person name="Pankoski-Walker L."/>
            <person name="Gretzula C."/>
            <person name="Gallagher B."/>
            <person name="Rachel R.A."/>
            <person name="Jenkins N.A."/>
            <person name="Copeland N.G."/>
            <person name="Morris F."/>
            <person name="Jacob J."/>
            <person name="Yeagle P."/>
            <person name="Williams D.S."/>
            <person name="Damek-Poprawa M."/>
        </authorList>
    </citation>
    <scope>FUNCTION</scope>
    <scope>INTERACTION WITH PRPH2</scope>
    <scope>SUBCELLULAR LOCATION</scope>
    <scope>TISSUE SPECIFICITY</scope>
</reference>
<reference key="5">
    <citation type="journal article" date="2009" name="J. Biol. Chem.">
        <title>Melanoregulin (MREG) modulates lysosome function in pigment epithelial cells.</title>
        <authorList>
            <person name="Damek-Poprawa M."/>
            <person name="Diemer T."/>
            <person name="Lopes V.S."/>
            <person name="Lillo C."/>
            <person name="Harper D.C."/>
            <person name="Marks M.S."/>
            <person name="Wu Y."/>
            <person name="Sparrow J.R."/>
            <person name="Rachel R.A."/>
            <person name="Williams D.S."/>
            <person name="Boesze-Battaglia K."/>
        </authorList>
    </citation>
    <scope>FUNCTION</scope>
    <scope>DISRUPTION PHENOTYPE</scope>
    <scope>TISSUE SPECIFICITY</scope>
    <scope>SUBCELLULAR LOCATION</scope>
</reference>
<reference key="6">
    <citation type="journal article" date="2010" name="Cell">
        <title>A tissue-specific atlas of mouse protein phosphorylation and expression.</title>
        <authorList>
            <person name="Huttlin E.L."/>
            <person name="Jedrychowski M.P."/>
            <person name="Elias J.E."/>
            <person name="Goswami T."/>
            <person name="Rad R."/>
            <person name="Beausoleil S.A."/>
            <person name="Villen J."/>
            <person name="Haas W."/>
            <person name="Sowa M.E."/>
            <person name="Gygi S.P."/>
        </authorList>
    </citation>
    <scope>IDENTIFICATION BY MASS SPECTROMETRY [LARGE SCALE ANALYSIS]</scope>
    <source>
        <tissue>Testis</tissue>
    </source>
</reference>
<reference key="7">
    <citation type="journal article" date="2012" name="Biochem. Biophys. Res. Commun.">
        <title>Melanoregulin is stably targeted to the melanosome membrane by palmitoylation.</title>
        <authorList>
            <person name="Wu X.S."/>
            <person name="Martina J.A."/>
            <person name="Hammer J.A. III"/>
        </authorList>
    </citation>
    <scope>FUNCTION</scope>
    <scope>PALMITOYLATION</scope>
    <scope>SUBCELLULAR LOCATION</scope>
    <scope>MUTAGENESIS OF 11-CYS--CYS-14; CYS-16 AND CYS-18</scope>
</reference>
<reference key="8">
    <citation type="journal article" date="2012" name="J. Cell Sci.">
        <title>Melanoregulin regulates retrograde melanosome transport through interaction with the RILP-p150Glued complex in melanocytes.</title>
        <authorList>
            <person name="Ohbayashi N."/>
            <person name="Maruta Y."/>
            <person name="Ishida M."/>
            <person name="Fukuda M."/>
        </authorList>
    </citation>
    <scope>FUNCTION</scope>
    <scope>DISRUPTION PHENOTYPE</scope>
    <scope>SUBCELLULAR LOCATION</scope>
    <scope>INTERACTION WITH RILP</scope>
    <scope>IDENTIFICATION IN A COMPLEX WITH DCTN1 AND RILP</scope>
</reference>
<reference key="9">
    <citation type="journal article" date="2012" name="Proc. Natl. Acad. Sci. U.S.A.">
        <title>Melanoregulin regulates a shedding mechanism that drives melanosome transfer from melanocytes to keratinocytes.</title>
        <authorList>
            <person name="Wu X.S."/>
            <person name="Masedunskas A."/>
            <person name="Weigert R."/>
            <person name="Copeland N.G."/>
            <person name="Jenkins N.A."/>
            <person name="Hammer J.A."/>
        </authorList>
    </citation>
    <scope>FUNCTION</scope>
    <scope>DISRUPTION PHENOTYPE</scope>
</reference>
<reference evidence="16" key="10">
    <citation type="journal article" date="2018" name="Structure">
        <title>The Structure of Melanoregulin Reveals a Role for Cholesterol Recognition in the Protein's Ability to Promote Dynein Function.</title>
        <authorList>
            <person name="Rout A.K."/>
            <person name="Wu X."/>
            <person name="Starich M.R."/>
            <person name="Strub M.P."/>
            <person name="Hammer J.A."/>
            <person name="Tjandra N."/>
        </authorList>
    </citation>
    <scope>STRUCTURE BY NMR OF 33-214</scope>
    <scope>FUNCTION</scope>
    <scope>SUBCELLULAR LOCATION</scope>
    <scope>MUTAGENESIS OF TYR-166; ASP-177; GLU-180 AND ASP-181</scope>
</reference>